<feature type="chain" id="PRO_1000185203" description="UPF0346 protein BCA_2383">
    <location>
        <begin position="1"/>
        <end position="71"/>
    </location>
</feature>
<protein>
    <recommendedName>
        <fullName evidence="1">UPF0346 protein BCA_2383</fullName>
    </recommendedName>
</protein>
<reference key="1">
    <citation type="submission" date="2009-02" db="EMBL/GenBank/DDBJ databases">
        <title>Genome sequence of Bacillus cereus 03BB102.</title>
        <authorList>
            <person name="Dodson R.J."/>
            <person name="Jackson P."/>
            <person name="Munk A.C."/>
            <person name="Brettin T."/>
            <person name="Bruce D."/>
            <person name="Detter C."/>
            <person name="Tapia R."/>
            <person name="Han C."/>
            <person name="Sutton G."/>
            <person name="Sims D."/>
        </authorList>
    </citation>
    <scope>NUCLEOTIDE SEQUENCE [LARGE SCALE GENOMIC DNA]</scope>
    <source>
        <strain>03BB102</strain>
    </source>
</reference>
<sequence>MKKTFYHYMMKHRAALFSNEISNLAEAMYDDLSFPKQSEDYDEISSYLELSGMLESMSIFDEAWDLYIQDR</sequence>
<dbReference type="EMBL" id="CP001407">
    <property type="protein sequence ID" value="ACO26255.1"/>
    <property type="molecule type" value="Genomic_DNA"/>
</dbReference>
<dbReference type="RefSeq" id="WP_000750724.1">
    <property type="nucleotide sequence ID" value="NZ_CP009318.1"/>
</dbReference>
<dbReference type="SMR" id="C1ETG6"/>
<dbReference type="KEGG" id="bcx:BCA_2383"/>
<dbReference type="PATRIC" id="fig|572264.18.peg.2329"/>
<dbReference type="Proteomes" id="UP000002210">
    <property type="component" value="Chromosome"/>
</dbReference>
<dbReference type="Gene3D" id="1.10.150.260">
    <property type="entry name" value="YozE SAM-like"/>
    <property type="match status" value="1"/>
</dbReference>
<dbReference type="HAMAP" id="MF_01538">
    <property type="entry name" value="UPF0346"/>
    <property type="match status" value="1"/>
</dbReference>
<dbReference type="InterPro" id="IPR010673">
    <property type="entry name" value="UPF0346"/>
</dbReference>
<dbReference type="InterPro" id="IPR023089">
    <property type="entry name" value="YozE_SAM-like"/>
</dbReference>
<dbReference type="InterPro" id="IPR036806">
    <property type="entry name" value="YozE_SAM-like_sf"/>
</dbReference>
<dbReference type="NCBIfam" id="NF010193">
    <property type="entry name" value="PRK13672.1"/>
    <property type="match status" value="1"/>
</dbReference>
<dbReference type="Pfam" id="PF06855">
    <property type="entry name" value="YozE_SAM_like"/>
    <property type="match status" value="1"/>
</dbReference>
<dbReference type="PIRSF" id="PIRSF037262">
    <property type="entry name" value="UCP037262"/>
    <property type="match status" value="1"/>
</dbReference>
<dbReference type="SUPFAM" id="SSF140652">
    <property type="entry name" value="YozE-like"/>
    <property type="match status" value="1"/>
</dbReference>
<organism>
    <name type="scientific">Bacillus cereus (strain 03BB102)</name>
    <dbReference type="NCBI Taxonomy" id="572264"/>
    <lineage>
        <taxon>Bacteria</taxon>
        <taxon>Bacillati</taxon>
        <taxon>Bacillota</taxon>
        <taxon>Bacilli</taxon>
        <taxon>Bacillales</taxon>
        <taxon>Bacillaceae</taxon>
        <taxon>Bacillus</taxon>
        <taxon>Bacillus cereus group</taxon>
    </lineage>
</organism>
<evidence type="ECO:0000255" key="1">
    <source>
        <dbReference type="HAMAP-Rule" id="MF_01538"/>
    </source>
</evidence>
<proteinExistence type="inferred from homology"/>
<comment type="similarity">
    <text evidence="1">Belongs to the UPF0346 family.</text>
</comment>
<accession>C1ETG6</accession>
<name>Y2383_BACC3</name>
<gene>
    <name type="ordered locus">BCA_2383</name>
</gene>